<accession>Q2JHE1</accession>
<organism>
    <name type="scientific">Synechococcus sp. (strain JA-2-3B'a(2-13))</name>
    <name type="common">Cyanobacteria bacterium Yellowstone B-Prime</name>
    <dbReference type="NCBI Taxonomy" id="321332"/>
    <lineage>
        <taxon>Bacteria</taxon>
        <taxon>Bacillati</taxon>
        <taxon>Cyanobacteriota</taxon>
        <taxon>Cyanophyceae</taxon>
        <taxon>Synechococcales</taxon>
        <taxon>Synechococcaceae</taxon>
        <taxon>Synechococcus</taxon>
    </lineage>
</organism>
<dbReference type="EMBL" id="CP000240">
    <property type="protein sequence ID" value="ABD02760.1"/>
    <property type="molecule type" value="Genomic_DNA"/>
</dbReference>
<dbReference type="RefSeq" id="WP_011433401.1">
    <property type="nucleotide sequence ID" value="NC_007776.1"/>
</dbReference>
<dbReference type="SMR" id="Q2JHE1"/>
<dbReference type="STRING" id="321332.CYB_1803"/>
<dbReference type="KEGG" id="cyb:CYB_1803"/>
<dbReference type="eggNOG" id="COG3794">
    <property type="taxonomic scope" value="Bacteria"/>
</dbReference>
<dbReference type="HOGENOM" id="CLU_084115_0_1_3"/>
<dbReference type="OrthoDB" id="680163at2"/>
<dbReference type="Proteomes" id="UP000001938">
    <property type="component" value="Chromosome"/>
</dbReference>
<dbReference type="GO" id="GO:0031676">
    <property type="term" value="C:plasma membrane-derived thylakoid membrane"/>
    <property type="evidence" value="ECO:0007669"/>
    <property type="project" value="UniProtKB-SubCell"/>
</dbReference>
<dbReference type="GO" id="GO:0005507">
    <property type="term" value="F:copper ion binding"/>
    <property type="evidence" value="ECO:0007669"/>
    <property type="project" value="UniProtKB-UniRule"/>
</dbReference>
<dbReference type="GO" id="GO:0009055">
    <property type="term" value="F:electron transfer activity"/>
    <property type="evidence" value="ECO:0007669"/>
    <property type="project" value="UniProtKB-UniRule"/>
</dbReference>
<dbReference type="CDD" id="cd04219">
    <property type="entry name" value="Plastocyanin"/>
    <property type="match status" value="1"/>
</dbReference>
<dbReference type="Gene3D" id="2.60.40.420">
    <property type="entry name" value="Cupredoxins - blue copper proteins"/>
    <property type="match status" value="1"/>
</dbReference>
<dbReference type="HAMAP" id="MF_00566">
    <property type="entry name" value="Cytb6_f_plastocyanin"/>
    <property type="match status" value="1"/>
</dbReference>
<dbReference type="InterPro" id="IPR000923">
    <property type="entry name" value="BlueCu_1"/>
</dbReference>
<dbReference type="InterPro" id="IPR028871">
    <property type="entry name" value="BlueCu_1_BS"/>
</dbReference>
<dbReference type="InterPro" id="IPR001235">
    <property type="entry name" value="Copper_blue_Plastocyanin"/>
</dbReference>
<dbReference type="InterPro" id="IPR008972">
    <property type="entry name" value="Cupredoxin"/>
</dbReference>
<dbReference type="InterPro" id="IPR002387">
    <property type="entry name" value="Plastocyanin"/>
</dbReference>
<dbReference type="InterPro" id="IPR023511">
    <property type="entry name" value="Plastocyanin_cyanobac"/>
</dbReference>
<dbReference type="NCBIfam" id="TIGR02656">
    <property type="entry name" value="cyanin_plasto"/>
    <property type="match status" value="1"/>
</dbReference>
<dbReference type="PANTHER" id="PTHR34192">
    <property type="entry name" value="PLASTOCYANIN MAJOR ISOFORM, CHLOROPLASTIC-RELATED"/>
    <property type="match status" value="1"/>
</dbReference>
<dbReference type="PANTHER" id="PTHR34192:SF10">
    <property type="entry name" value="PLASTOCYANIN MAJOR ISOFORM, CHLOROPLASTIC-RELATED"/>
    <property type="match status" value="1"/>
</dbReference>
<dbReference type="Pfam" id="PF00127">
    <property type="entry name" value="Copper-bind"/>
    <property type="match status" value="1"/>
</dbReference>
<dbReference type="PRINTS" id="PR00156">
    <property type="entry name" value="COPPERBLUE"/>
</dbReference>
<dbReference type="PRINTS" id="PR00157">
    <property type="entry name" value="PLASTOCYANIN"/>
</dbReference>
<dbReference type="SUPFAM" id="SSF49503">
    <property type="entry name" value="Cupredoxins"/>
    <property type="match status" value="1"/>
</dbReference>
<dbReference type="PROSITE" id="PS00196">
    <property type="entry name" value="COPPER_BLUE"/>
    <property type="match status" value="1"/>
</dbReference>
<protein>
    <recommendedName>
        <fullName evidence="1">Plastocyanin</fullName>
    </recommendedName>
</protein>
<reference key="1">
    <citation type="journal article" date="2007" name="ISME J.">
        <title>Population level functional diversity in a microbial community revealed by comparative genomic and metagenomic analyses.</title>
        <authorList>
            <person name="Bhaya D."/>
            <person name="Grossman A.R."/>
            <person name="Steunou A.-S."/>
            <person name="Khuri N."/>
            <person name="Cohan F.M."/>
            <person name="Hamamura N."/>
            <person name="Melendrez M.C."/>
            <person name="Bateson M.M."/>
            <person name="Ward D.M."/>
            <person name="Heidelberg J.F."/>
        </authorList>
    </citation>
    <scope>NUCLEOTIDE SEQUENCE [LARGE SCALE GENOMIC DNA]</scope>
    <source>
        <strain>JA-2-3B'a(2-13)</strain>
    </source>
</reference>
<feature type="signal peptide" evidence="1">
    <location>
        <begin position="1"/>
        <end position="34"/>
    </location>
</feature>
<feature type="chain" id="PRO_1000146803" description="Plastocyanin">
    <location>
        <begin position="35"/>
        <end position="136"/>
    </location>
</feature>
<feature type="domain" description="Plastocyanin-like" evidence="1">
    <location>
        <begin position="35"/>
        <end position="136"/>
    </location>
</feature>
<feature type="binding site" evidence="1">
    <location>
        <position position="73"/>
    </location>
    <ligand>
        <name>Cu cation</name>
        <dbReference type="ChEBI" id="CHEBI:23378"/>
    </ligand>
</feature>
<feature type="binding site" evidence="1">
    <location>
        <position position="120"/>
    </location>
    <ligand>
        <name>Cu cation</name>
        <dbReference type="ChEBI" id="CHEBI:23378"/>
    </ligand>
</feature>
<feature type="binding site" evidence="1">
    <location>
        <position position="123"/>
    </location>
    <ligand>
        <name>Cu cation</name>
        <dbReference type="ChEBI" id="CHEBI:23378"/>
    </ligand>
</feature>
<feature type="binding site" evidence="1">
    <location>
        <position position="128"/>
    </location>
    <ligand>
        <name>Cu cation</name>
        <dbReference type="ChEBI" id="CHEBI:23378"/>
    </ligand>
</feature>
<evidence type="ECO:0000255" key="1">
    <source>
        <dbReference type="HAMAP-Rule" id="MF_00566"/>
    </source>
</evidence>
<sequence>MSLVFNLVKRLQLILLSLVVGGLAVAFLSNPAAAETYIVKMGSDKAQLVYDPPSLTINQGDTVQWVNNKVYPHNVVFDKVPGGDAALAAKLSHKALLTAPKQVVESAFVDVPPGEYTYYCTPHRGAGMVGKIIVNG</sequence>
<name>PLAS_SYNJB</name>
<comment type="function">
    <text evidence="1">Participates in electron transfer between P700 and the cytochrome b6-f complex in photosystem I.</text>
</comment>
<comment type="cofactor">
    <cofactor evidence="1">
        <name>Cu(2+)</name>
        <dbReference type="ChEBI" id="CHEBI:29036"/>
    </cofactor>
</comment>
<comment type="subcellular location">
    <subcellularLocation>
        <location evidence="1">Cellular thylakoid membrane</location>
        <topology evidence="1">Peripheral membrane protein</topology>
        <orientation evidence="1">Lumenal side</orientation>
    </subcellularLocation>
    <text>Loosely bound to the thylakoid inner membrane surface.</text>
</comment>
<comment type="similarity">
    <text evidence="1">Belongs to the plastocyanin family.</text>
</comment>
<gene>
    <name evidence="1" type="primary">petE</name>
    <name type="ordered locus">CYB_1803</name>
</gene>
<keyword id="KW-0186">Copper</keyword>
<keyword id="KW-0249">Electron transport</keyword>
<keyword id="KW-0472">Membrane</keyword>
<keyword id="KW-0479">Metal-binding</keyword>
<keyword id="KW-1185">Reference proteome</keyword>
<keyword id="KW-0732">Signal</keyword>
<keyword id="KW-0793">Thylakoid</keyword>
<keyword id="KW-0813">Transport</keyword>
<proteinExistence type="inferred from homology"/>